<comment type="function">
    <text evidence="1">Involved in the degradation of chitin. ChbG is essential for growth on the acetylated chitooligosaccharides chitobiose and chitotriose but is dispensable for growth on cellobiose and chitosan dimer, the deacetylated form of chitobiose. Deacetylation of chitobiose-6-P and chitotriose-6-P is necessary for both the activation of the chb promoter by the regulatory protein ChbR and the hydrolysis of phosphorylated beta-glucosides by the phospho-beta-glucosidase ChbF. Catalyzes the removal of only one acetyl group from chitobiose-6-P to yield monoacetylchitobiose-6-P, the inducer of ChbR and the substrate of ChbF.</text>
</comment>
<comment type="catalytic activity">
    <reaction evidence="1">
        <text>N,N'-diacetylchitobiose + H2O = N-acetyl-beta-D-glucosaminyl-(1-&gt;4)-D-glucosamine + acetate</text>
        <dbReference type="Rhea" id="RHEA:27469"/>
        <dbReference type="ChEBI" id="CHEBI:15377"/>
        <dbReference type="ChEBI" id="CHEBI:28681"/>
        <dbReference type="ChEBI" id="CHEBI:30089"/>
        <dbReference type="ChEBI" id="CHEBI:59910"/>
        <dbReference type="EC" id="3.5.1.105"/>
    </reaction>
</comment>
<comment type="catalytic activity">
    <reaction evidence="1">
        <text>diacetylchitobiose-6'-phosphate + H2O = N'-monoacetylchitobiose-6'-phosphate + acetate</text>
        <dbReference type="Rhea" id="RHEA:35083"/>
        <dbReference type="ChEBI" id="CHEBI:15377"/>
        <dbReference type="ChEBI" id="CHEBI:30089"/>
        <dbReference type="ChEBI" id="CHEBI:64883"/>
        <dbReference type="ChEBI" id="CHEBI:71315"/>
    </reaction>
</comment>
<comment type="cofactor">
    <cofactor evidence="1">
        <name>Mg(2+)</name>
        <dbReference type="ChEBI" id="CHEBI:18420"/>
    </cofactor>
</comment>
<comment type="pathway">
    <text evidence="1">Glycan degradation; chitin degradation.</text>
</comment>
<comment type="subunit">
    <text evidence="1">Homodimer.</text>
</comment>
<comment type="subcellular location">
    <subcellularLocation>
        <location evidence="1">Cytoplasm</location>
    </subcellularLocation>
</comment>
<comment type="similarity">
    <text evidence="1">Belongs to the YdjC deacetylase family. ChbG subfamily.</text>
</comment>
<name>CHBG_ECO5E</name>
<protein>
    <recommendedName>
        <fullName evidence="1">Chitooligosaccharide deacetylase</fullName>
        <shortName evidence="1">COD</shortName>
        <ecNumber evidence="1">3.5.1.105</ecNumber>
    </recommendedName>
    <alternativeName>
        <fullName evidence="1">Chitin disaccharide deacetylase</fullName>
    </alternativeName>
    <alternativeName>
        <fullName evidence="1">Chitobiose deacetylase</fullName>
    </alternativeName>
    <alternativeName>
        <fullName evidence="1">Chitobiose-6P deacetylase</fullName>
    </alternativeName>
    <alternativeName>
        <fullName evidence="1">Chitotriose deacetylase</fullName>
    </alternativeName>
    <alternativeName>
        <fullName evidence="1">Chitotriose-6P deacetylase</fullName>
    </alternativeName>
</protein>
<evidence type="ECO:0000255" key="1">
    <source>
        <dbReference type="HAMAP-Rule" id="MF_01246"/>
    </source>
</evidence>
<feature type="chain" id="PRO_1000139820" description="Chitooligosaccharide deacetylase">
    <location>
        <begin position="1"/>
        <end position="252"/>
    </location>
</feature>
<feature type="binding site" evidence="1">
    <location>
        <position position="125"/>
    </location>
    <ligand>
        <name>Mg(2+)</name>
        <dbReference type="ChEBI" id="CHEBI:18420"/>
    </ligand>
</feature>
<organism>
    <name type="scientific">Escherichia coli O157:H7 (strain EC4115 / EHEC)</name>
    <dbReference type="NCBI Taxonomy" id="444450"/>
    <lineage>
        <taxon>Bacteria</taxon>
        <taxon>Pseudomonadati</taxon>
        <taxon>Pseudomonadota</taxon>
        <taxon>Gammaproteobacteria</taxon>
        <taxon>Enterobacterales</taxon>
        <taxon>Enterobacteriaceae</taxon>
        <taxon>Escherichia</taxon>
    </lineage>
</organism>
<sequence length="252" mass="28017">MERLLIVNADDFGLSKGQNYGIIEACRNGIVTSTTALVNGQAIDHAVQLSRDEPSLAIGMNFVLTMGKPLTAMPGLTRDGVLGKWIWQLAEEDALPLEEITQELASQYLRFIELFGRKPTHLDSHHHVHMFPQIFPIVARFAAEEGIALRIDRQPLSNAGDLPANLRSSHGFSSAFYGEEISEALFLQVLDDSSHRGERSLEVMCHPAFVDNTIRQSAYCFPRLTELEVLTSASLKYAIAERGYRLGSYLDV</sequence>
<reference key="1">
    <citation type="journal article" date="2011" name="Proc. Natl. Acad. Sci. U.S.A.">
        <title>Genomic anatomy of Escherichia coli O157:H7 outbreaks.</title>
        <authorList>
            <person name="Eppinger M."/>
            <person name="Mammel M.K."/>
            <person name="Leclerc J.E."/>
            <person name="Ravel J."/>
            <person name="Cebula T.A."/>
        </authorList>
    </citation>
    <scope>NUCLEOTIDE SEQUENCE [LARGE SCALE GENOMIC DNA]</scope>
    <source>
        <strain>EC4115 / EHEC</strain>
    </source>
</reference>
<dbReference type="EC" id="3.5.1.105" evidence="1"/>
<dbReference type="EMBL" id="CP001164">
    <property type="protein sequence ID" value="ACI35673.1"/>
    <property type="molecule type" value="Genomic_DNA"/>
</dbReference>
<dbReference type="RefSeq" id="WP_000440480.1">
    <property type="nucleotide sequence ID" value="NC_011353.1"/>
</dbReference>
<dbReference type="SMR" id="B5YQ20"/>
<dbReference type="KEGG" id="ecf:ECH74115_2451"/>
<dbReference type="HOGENOM" id="CLU_064244_4_1_6"/>
<dbReference type="UniPathway" id="UPA00349"/>
<dbReference type="GO" id="GO:0005737">
    <property type="term" value="C:cytoplasm"/>
    <property type="evidence" value="ECO:0007669"/>
    <property type="project" value="UniProtKB-SubCell"/>
</dbReference>
<dbReference type="GO" id="GO:0036311">
    <property type="term" value="F:chitin disaccharide deacetylase activity"/>
    <property type="evidence" value="ECO:0007669"/>
    <property type="project" value="UniProtKB-UniRule"/>
</dbReference>
<dbReference type="GO" id="GO:0019213">
    <property type="term" value="F:deacetylase activity"/>
    <property type="evidence" value="ECO:0007669"/>
    <property type="project" value="TreeGrafter"/>
</dbReference>
<dbReference type="GO" id="GO:0046872">
    <property type="term" value="F:metal ion binding"/>
    <property type="evidence" value="ECO:0007669"/>
    <property type="project" value="UniProtKB-KW"/>
</dbReference>
<dbReference type="GO" id="GO:0006032">
    <property type="term" value="P:chitin catabolic process"/>
    <property type="evidence" value="ECO:0007669"/>
    <property type="project" value="UniProtKB-UniPathway"/>
</dbReference>
<dbReference type="GO" id="GO:0052777">
    <property type="term" value="P:diacetylchitobiose catabolic process"/>
    <property type="evidence" value="ECO:0007669"/>
    <property type="project" value="UniProtKB-UniRule"/>
</dbReference>
<dbReference type="GO" id="GO:0000272">
    <property type="term" value="P:polysaccharide catabolic process"/>
    <property type="evidence" value="ECO:0007669"/>
    <property type="project" value="UniProtKB-UniRule"/>
</dbReference>
<dbReference type="CDD" id="cd10803">
    <property type="entry name" value="YdjC_EF3048_like"/>
    <property type="match status" value="1"/>
</dbReference>
<dbReference type="FunFam" id="3.20.20.370:FF:000001">
    <property type="entry name" value="Chitooligosaccharide deacetylase"/>
    <property type="match status" value="1"/>
</dbReference>
<dbReference type="Gene3D" id="3.20.20.370">
    <property type="entry name" value="Glycoside hydrolase/deacetylase"/>
    <property type="match status" value="1"/>
</dbReference>
<dbReference type="HAMAP" id="MF_01246">
    <property type="entry name" value="COD"/>
    <property type="match status" value="1"/>
</dbReference>
<dbReference type="InterPro" id="IPR022948">
    <property type="entry name" value="COD_ChbG_bac"/>
</dbReference>
<dbReference type="InterPro" id="IPR011330">
    <property type="entry name" value="Glyco_hydro/deAcase_b/a-brl"/>
</dbReference>
<dbReference type="InterPro" id="IPR006879">
    <property type="entry name" value="YdjC-like"/>
</dbReference>
<dbReference type="NCBIfam" id="NF002559">
    <property type="entry name" value="PRK02134.1"/>
    <property type="match status" value="1"/>
</dbReference>
<dbReference type="PANTHER" id="PTHR31609:SF1">
    <property type="entry name" value="CARBOHYDRATE DEACETYLASE"/>
    <property type="match status" value="1"/>
</dbReference>
<dbReference type="PANTHER" id="PTHR31609">
    <property type="entry name" value="YDJC DEACETYLASE FAMILY MEMBER"/>
    <property type="match status" value="1"/>
</dbReference>
<dbReference type="Pfam" id="PF04794">
    <property type="entry name" value="YdjC"/>
    <property type="match status" value="1"/>
</dbReference>
<dbReference type="SUPFAM" id="SSF88713">
    <property type="entry name" value="Glycoside hydrolase/deacetylase"/>
    <property type="match status" value="1"/>
</dbReference>
<keyword id="KW-0119">Carbohydrate metabolism</keyword>
<keyword id="KW-0146">Chitin degradation</keyword>
<keyword id="KW-0963">Cytoplasm</keyword>
<keyword id="KW-0378">Hydrolase</keyword>
<keyword id="KW-0460">Magnesium</keyword>
<keyword id="KW-0479">Metal-binding</keyword>
<keyword id="KW-0624">Polysaccharide degradation</keyword>
<accession>B5YQ20</accession>
<proteinExistence type="inferred from homology"/>
<gene>
    <name evidence="1" type="primary">chbG</name>
    <name type="ordered locus">ECH74115_2451</name>
</gene>